<sequence length="251" mass="27178">MSAKPQPIAAANWKCNGTTASIEKLVQVFNEHTISHDVQCVVAPTFVHIPLVQAKLRNPKYVISAENAIAKSGAFTGEVSMPILKDIGVHWVILGHSERRTYYGETDEIVAQKVSEACKQGFMVIACIGETLQQREANQTAKVVLSQTSAIAAKLTKDAWNQVVLAYEPVWAIGTGKVATPEQAQEVHLLLRKWVSENIGTDVAAKLRILYGGSVNAANAATLYAKPDINGFLVGGASLKPEFRDIIDATR</sequence>
<comment type="catalytic activity">
    <reaction>
        <text>D-glyceraldehyde 3-phosphate = dihydroxyacetone phosphate</text>
        <dbReference type="Rhea" id="RHEA:18585"/>
        <dbReference type="ChEBI" id="CHEBI:57642"/>
        <dbReference type="ChEBI" id="CHEBI:59776"/>
        <dbReference type="EC" id="5.3.1.1"/>
    </reaction>
</comment>
<comment type="pathway">
    <text>Carbohydrate biosynthesis; gluconeogenesis.</text>
</comment>
<comment type="pathway">
    <text>Carbohydrate degradation; glycolysis; D-glyceraldehyde 3-phosphate from glycerone phosphate: step 1/1.</text>
</comment>
<comment type="subunit">
    <text evidence="1 2">Homodimer.</text>
</comment>
<comment type="subcellular location">
    <subcellularLocation>
        <location>Cytoplasm</location>
    </subcellularLocation>
    <subcellularLocation>
        <location>Glycosome</location>
    </subcellularLocation>
</comment>
<comment type="similarity">
    <text evidence="3">Belongs to the triosephosphate isomerase family.</text>
</comment>
<protein>
    <recommendedName>
        <fullName>Triosephosphate isomerase</fullName>
        <shortName>TIM</shortName>
        <ecNumber>5.3.1.1</ecNumber>
    </recommendedName>
    <alternativeName>
        <fullName>Triose-phosphate isomerase</fullName>
    </alternativeName>
</protein>
<organism>
    <name type="scientific">Leishmania mexicana</name>
    <dbReference type="NCBI Taxonomy" id="5665"/>
    <lineage>
        <taxon>Eukaryota</taxon>
        <taxon>Discoba</taxon>
        <taxon>Euglenozoa</taxon>
        <taxon>Kinetoplastea</taxon>
        <taxon>Metakinetoplastina</taxon>
        <taxon>Trypanosomatida</taxon>
        <taxon>Trypanosomatidae</taxon>
        <taxon>Leishmaniinae</taxon>
        <taxon>Leishmania</taxon>
    </lineage>
</organism>
<reference key="1">
    <citation type="journal article" date="1994" name="Eur. J. Biochem.">
        <title>Triose-phosphate isomerase of Leishmania mexicana mexicana. Cloning and characterization of the gene, overexpression in Escherichia coli and analysis of the protein.</title>
        <authorList>
            <person name="Kohl L."/>
            <person name="Callens M."/>
            <person name="Wierenga R.K."/>
            <person name="Opperdoes F.R."/>
            <person name="Michels P.A.M."/>
        </authorList>
    </citation>
    <scope>NUCLEOTIDE SEQUENCE [GENOMIC DNA]</scope>
</reference>
<reference key="2">
    <citation type="journal article" date="1999" name="Protein Eng.">
        <title>Structural and mutagenesis studies of leishmania triosephosphate isomerase: a point mutation can convert a mesophilic enzyme into a superstable enzyme without losing catalytic power.</title>
        <authorList>
            <person name="Williams J.C."/>
            <person name="Zeelen J.P."/>
            <person name="Neubauer G."/>
            <person name="Vriend G."/>
            <person name="Backmann J."/>
            <person name="Michels P.A.M."/>
            <person name="Lambeir A.-M."/>
            <person name="Wierenga R.K."/>
        </authorList>
    </citation>
    <scope>X-RAY CRYSTALLOGRAPHY (1.83 ANGSTROMS)</scope>
</reference>
<reference key="3">
    <citation type="journal article" date="2001" name="Eur. J. Biochem.">
        <title>Structural determinants for ligand binding and catalysis of triosephosphate isomerase.</title>
        <authorList>
            <person name="Kursula I."/>
            <person name="Partanen S."/>
            <person name="Lambeir A.-M."/>
            <person name="Antonov D.M."/>
            <person name="Augustyns K."/>
            <person name="Wierenga R.K."/>
        </authorList>
    </citation>
    <scope>X-RAY CRYSTALLOGRAPHY (2.0 ANGSTROMS) IN COMPLEX WITH SUBSTRATE ANALOG</scope>
</reference>
<reference key="4">
    <citation type="journal article" date="2003" name="J. Biol. Chem.">
        <title>Crystal structure of triosephosphate isomerase complexed with 2-phosphoglycolate at 0.83-A resolution.</title>
        <authorList>
            <person name="Kursula I."/>
            <person name="Wierenga R.K."/>
        </authorList>
    </citation>
    <scope>X-RAY CRYSTALLOGRAPHY (0.83 ANGSTROMS) IN COMPLEX WITH SUBSTRATE ANALOG</scope>
</reference>
<feature type="chain" id="PRO_0000090137" description="Triosephosphate isomerase">
    <location>
        <begin position="1"/>
        <end position="251"/>
    </location>
</feature>
<feature type="active site" description="Electrophile">
    <location>
        <position position="96"/>
    </location>
</feature>
<feature type="active site" description="Proton acceptor">
    <location>
        <position position="168"/>
    </location>
</feature>
<feature type="binding site">
    <location>
        <position position="12"/>
    </location>
    <ligand>
        <name>substrate</name>
    </ligand>
</feature>
<feature type="binding site">
    <location>
        <position position="14"/>
    </location>
    <ligand>
        <name>substrate</name>
    </ligand>
</feature>
<feature type="strand" evidence="4">
    <location>
        <begin position="8"/>
        <end position="12"/>
    </location>
</feature>
<feature type="helix" evidence="4">
    <location>
        <begin position="19"/>
        <end position="31"/>
    </location>
</feature>
<feature type="strand" evidence="4">
    <location>
        <begin position="39"/>
        <end position="43"/>
    </location>
</feature>
<feature type="helix" evidence="4">
    <location>
        <begin position="46"/>
        <end position="48"/>
    </location>
</feature>
<feature type="helix" evidence="4">
    <location>
        <begin position="49"/>
        <end position="55"/>
    </location>
</feature>
<feature type="strand" evidence="4">
    <location>
        <begin position="61"/>
        <end position="66"/>
    </location>
</feature>
<feature type="strand" evidence="4">
    <location>
        <begin position="69"/>
        <end position="71"/>
    </location>
</feature>
<feature type="helix" evidence="4">
    <location>
        <begin position="81"/>
        <end position="86"/>
    </location>
</feature>
<feature type="strand" evidence="4">
    <location>
        <begin position="91"/>
        <end position="95"/>
    </location>
</feature>
<feature type="helix" evidence="4">
    <location>
        <begin position="97"/>
        <end position="102"/>
    </location>
</feature>
<feature type="helix" evidence="4">
    <location>
        <begin position="107"/>
        <end position="119"/>
    </location>
</feature>
<feature type="strand" evidence="4">
    <location>
        <begin position="123"/>
        <end position="128"/>
    </location>
</feature>
<feature type="helix" evidence="4">
    <location>
        <begin position="132"/>
        <end position="136"/>
    </location>
</feature>
<feature type="helix" evidence="4">
    <location>
        <begin position="140"/>
        <end position="152"/>
    </location>
</feature>
<feature type="helix" evidence="4">
    <location>
        <begin position="158"/>
        <end position="162"/>
    </location>
</feature>
<feature type="strand" evidence="4">
    <location>
        <begin position="163"/>
        <end position="167"/>
    </location>
</feature>
<feature type="helix" evidence="4">
    <location>
        <begin position="170"/>
        <end position="172"/>
    </location>
</feature>
<feature type="strand" evidence="4">
    <location>
        <begin position="173"/>
        <end position="176"/>
    </location>
</feature>
<feature type="helix" evidence="4">
    <location>
        <begin position="181"/>
        <end position="198"/>
    </location>
</feature>
<feature type="helix" evidence="4">
    <location>
        <begin position="201"/>
        <end position="206"/>
    </location>
</feature>
<feature type="strand" evidence="4">
    <location>
        <begin position="208"/>
        <end position="214"/>
    </location>
</feature>
<feature type="turn" evidence="4">
    <location>
        <begin position="217"/>
        <end position="219"/>
    </location>
</feature>
<feature type="helix" evidence="4">
    <location>
        <begin position="220"/>
        <end position="224"/>
    </location>
</feature>
<feature type="strand" evidence="4">
    <location>
        <begin position="231"/>
        <end position="235"/>
    </location>
</feature>
<feature type="helix" evidence="4">
    <location>
        <begin position="236"/>
        <end position="239"/>
    </location>
</feature>
<feature type="helix" evidence="4">
    <location>
        <begin position="243"/>
        <end position="248"/>
    </location>
</feature>
<dbReference type="EC" id="5.3.1.1"/>
<dbReference type="EMBL" id="X74797">
    <property type="protein sequence ID" value="CAA52804.1"/>
    <property type="molecule type" value="Genomic_DNA"/>
</dbReference>
<dbReference type="PIR" id="S42356">
    <property type="entry name" value="S42356"/>
</dbReference>
<dbReference type="PDB" id="1AMK">
    <property type="method" value="X-ray"/>
    <property type="resolution" value="1.83 A"/>
    <property type="chains" value="A=1-251"/>
</dbReference>
<dbReference type="PDB" id="1IF2">
    <property type="method" value="X-ray"/>
    <property type="resolution" value="2.00 A"/>
    <property type="chains" value="A=1-251"/>
</dbReference>
<dbReference type="PDB" id="1N55">
    <property type="method" value="X-ray"/>
    <property type="resolution" value="0.83 A"/>
    <property type="chains" value="A=1-251"/>
</dbReference>
<dbReference type="PDB" id="1QDS">
    <property type="method" value="X-ray"/>
    <property type="resolution" value="2.00 A"/>
    <property type="chains" value="A=1-251"/>
</dbReference>
<dbReference type="PDB" id="2VXN">
    <property type="method" value="X-ray"/>
    <property type="resolution" value="0.82 A"/>
    <property type="chains" value="A=1-251"/>
</dbReference>
<dbReference type="PDB" id="2Y61">
    <property type="method" value="X-ray"/>
    <property type="resolution" value="0.99 A"/>
    <property type="chains" value="A=1-251"/>
</dbReference>
<dbReference type="PDB" id="2Y62">
    <property type="method" value="X-ray"/>
    <property type="resolution" value="1.08 A"/>
    <property type="chains" value="A=1-251"/>
</dbReference>
<dbReference type="PDB" id="2Y63">
    <property type="method" value="X-ray"/>
    <property type="resolution" value="1.97 A"/>
    <property type="chains" value="A=1-251"/>
</dbReference>
<dbReference type="PDB" id="7ABX">
    <property type="method" value="X-ray"/>
    <property type="resolution" value="1.20 A"/>
    <property type="chains" value="A=1-251"/>
</dbReference>
<dbReference type="PDB" id="7AZ3">
    <property type="method" value="Other"/>
    <property type="resolution" value="1.15 A"/>
    <property type="chains" value="A=1-251"/>
</dbReference>
<dbReference type="PDB" id="7AZ4">
    <property type="method" value="Other"/>
    <property type="resolution" value="1.15 A"/>
    <property type="chains" value="A=1-251"/>
</dbReference>
<dbReference type="PDB" id="7AZ9">
    <property type="method" value="Other"/>
    <property type="resolution" value="1.10 A"/>
    <property type="chains" value="A=1-251"/>
</dbReference>
<dbReference type="PDB" id="7AZA">
    <property type="method" value="Other"/>
    <property type="resolution" value="1.10 A"/>
    <property type="chains" value="A=1-251"/>
</dbReference>
<dbReference type="PDB" id="7QH0">
    <property type="method" value="X-ray"/>
    <property type="resolution" value="2.15 A"/>
    <property type="chains" value="A/B/C/D=1-251"/>
</dbReference>
<dbReference type="PDBsum" id="1AMK"/>
<dbReference type="PDBsum" id="1IF2"/>
<dbReference type="PDBsum" id="1N55"/>
<dbReference type="PDBsum" id="1QDS"/>
<dbReference type="PDBsum" id="2VXN"/>
<dbReference type="PDBsum" id="2Y61"/>
<dbReference type="PDBsum" id="2Y62"/>
<dbReference type="PDBsum" id="2Y63"/>
<dbReference type="PDBsum" id="7ABX"/>
<dbReference type="PDBsum" id="7AZ3"/>
<dbReference type="PDBsum" id="7AZ4"/>
<dbReference type="PDBsum" id="7AZ9"/>
<dbReference type="PDBsum" id="7AZA"/>
<dbReference type="PDBsum" id="7QH0"/>
<dbReference type="SMR" id="P48499"/>
<dbReference type="VEuPathDB" id="TriTrypDB:LmxM.24.0850"/>
<dbReference type="BRENDA" id="5.3.1.1">
    <property type="organism ID" value="2951"/>
</dbReference>
<dbReference type="UniPathway" id="UPA00109">
    <property type="reaction ID" value="UER00189"/>
</dbReference>
<dbReference type="UniPathway" id="UPA00138"/>
<dbReference type="EvolutionaryTrace" id="P48499"/>
<dbReference type="GO" id="GO:0005829">
    <property type="term" value="C:cytosol"/>
    <property type="evidence" value="ECO:0007669"/>
    <property type="project" value="TreeGrafter"/>
</dbReference>
<dbReference type="GO" id="GO:0020015">
    <property type="term" value="C:glycosome"/>
    <property type="evidence" value="ECO:0007669"/>
    <property type="project" value="UniProtKB-SubCell"/>
</dbReference>
<dbReference type="GO" id="GO:0004807">
    <property type="term" value="F:triose-phosphate isomerase activity"/>
    <property type="evidence" value="ECO:0007669"/>
    <property type="project" value="UniProtKB-EC"/>
</dbReference>
<dbReference type="GO" id="GO:0006094">
    <property type="term" value="P:gluconeogenesis"/>
    <property type="evidence" value="ECO:0007669"/>
    <property type="project" value="UniProtKB-UniPathway"/>
</dbReference>
<dbReference type="GO" id="GO:0046166">
    <property type="term" value="P:glyceraldehyde-3-phosphate biosynthetic process"/>
    <property type="evidence" value="ECO:0007669"/>
    <property type="project" value="TreeGrafter"/>
</dbReference>
<dbReference type="GO" id="GO:0019563">
    <property type="term" value="P:glycerol catabolic process"/>
    <property type="evidence" value="ECO:0007669"/>
    <property type="project" value="TreeGrafter"/>
</dbReference>
<dbReference type="GO" id="GO:0006096">
    <property type="term" value="P:glycolytic process"/>
    <property type="evidence" value="ECO:0007669"/>
    <property type="project" value="UniProtKB-UniPathway"/>
</dbReference>
<dbReference type="CDD" id="cd00311">
    <property type="entry name" value="TIM"/>
    <property type="match status" value="1"/>
</dbReference>
<dbReference type="FunFam" id="3.20.20.70:FF:000020">
    <property type="entry name" value="Triosephosphate isomerase"/>
    <property type="match status" value="1"/>
</dbReference>
<dbReference type="Gene3D" id="3.20.20.70">
    <property type="entry name" value="Aldolase class I"/>
    <property type="match status" value="1"/>
</dbReference>
<dbReference type="HAMAP" id="MF_00147_B">
    <property type="entry name" value="TIM_B"/>
    <property type="match status" value="1"/>
</dbReference>
<dbReference type="InterPro" id="IPR013785">
    <property type="entry name" value="Aldolase_TIM"/>
</dbReference>
<dbReference type="InterPro" id="IPR035990">
    <property type="entry name" value="TIM_sf"/>
</dbReference>
<dbReference type="InterPro" id="IPR022896">
    <property type="entry name" value="TrioseP_Isoase_bac/euk"/>
</dbReference>
<dbReference type="InterPro" id="IPR000652">
    <property type="entry name" value="Triosephosphate_isomerase"/>
</dbReference>
<dbReference type="InterPro" id="IPR020861">
    <property type="entry name" value="Triosephosphate_isomerase_AS"/>
</dbReference>
<dbReference type="NCBIfam" id="TIGR00419">
    <property type="entry name" value="tim"/>
    <property type="match status" value="1"/>
</dbReference>
<dbReference type="PANTHER" id="PTHR21139">
    <property type="entry name" value="TRIOSEPHOSPHATE ISOMERASE"/>
    <property type="match status" value="1"/>
</dbReference>
<dbReference type="PANTHER" id="PTHR21139:SF2">
    <property type="entry name" value="TRIOSEPHOSPHATE ISOMERASE"/>
    <property type="match status" value="1"/>
</dbReference>
<dbReference type="Pfam" id="PF00121">
    <property type="entry name" value="TIM"/>
    <property type="match status" value="1"/>
</dbReference>
<dbReference type="SUPFAM" id="SSF51351">
    <property type="entry name" value="Triosephosphate isomerase (TIM)"/>
    <property type="match status" value="1"/>
</dbReference>
<dbReference type="PROSITE" id="PS00171">
    <property type="entry name" value="TIM_1"/>
    <property type="match status" value="1"/>
</dbReference>
<dbReference type="PROSITE" id="PS51440">
    <property type="entry name" value="TIM_2"/>
    <property type="match status" value="1"/>
</dbReference>
<name>TPIS_LEIME</name>
<evidence type="ECO:0000269" key="1">
    <source>
    </source>
</evidence>
<evidence type="ECO:0000269" key="2">
    <source>
    </source>
</evidence>
<evidence type="ECO:0000305" key="3"/>
<evidence type="ECO:0007829" key="4">
    <source>
        <dbReference type="PDB" id="2VXN"/>
    </source>
</evidence>
<accession>P48499</accession>
<keyword id="KW-0002">3D-structure</keyword>
<keyword id="KW-0963">Cytoplasm</keyword>
<keyword id="KW-0312">Gluconeogenesis</keyword>
<keyword id="KW-0324">Glycolysis</keyword>
<keyword id="KW-0327">Glycosome</keyword>
<keyword id="KW-0413">Isomerase</keyword>
<keyword id="KW-0576">Peroxisome</keyword>
<proteinExistence type="evidence at protein level"/>